<name>CIKS_HUMAN</name>
<organism>
    <name type="scientific">Homo sapiens</name>
    <name type="common">Human</name>
    <dbReference type="NCBI Taxonomy" id="9606"/>
    <lineage>
        <taxon>Eukaryota</taxon>
        <taxon>Metazoa</taxon>
        <taxon>Chordata</taxon>
        <taxon>Craniata</taxon>
        <taxon>Vertebrata</taxon>
        <taxon>Euteleostomi</taxon>
        <taxon>Mammalia</taxon>
        <taxon>Eutheria</taxon>
        <taxon>Euarchontoglires</taxon>
        <taxon>Primates</taxon>
        <taxon>Haplorrhini</taxon>
        <taxon>Catarrhini</taxon>
        <taxon>Hominidae</taxon>
        <taxon>Homo</taxon>
    </lineage>
</organism>
<sequence>MPPQLQETRMNRSIPVEVDESEPYPSQLLKPIPEYSPEEESEPPAPNIRNMAPNSLSAPTMLHNSSGDFSQAHSTLKLANHQRPVSRQVTCLRTQVLEDSEDSFCRRHPGLGKAFPSGCSAVSEPASESVVGALPAEHQFSFMEKRNQWLVSQLSAASPDTGHDSDKSDQSLPNASADSLGGSQEMVQRPQPHRNRAGLDLPTIDTGYDSQPQDVLGIRQLERPLPLTSVCYPQDLPRPLRSREFPQFEPQRYPACAQMLPPNLSPHAPWNYHYHCPGSPDHQVPYGHDYPRAAYQQVIQPALPGQPLPGASVRGLHPVQKVILNYPSPWDHEERPAQRDCSFPGLPRHQDQPHHQPPNRAGAPGESLECPAELRPQVPQPPSPAAVPRPPSNPPARGTLKTSNLPEELRKVFITYSMDTAMEVVKFVNFLLVNGFQTAIDIFEDRIRGIDIIKWMERYLRDKTVMIIVAISPKYKQDVEGAESQLDEDEHGLHTKYIHRMMQIEFIKQGSMNFRFIPVLFPNAKKEHVPTWLQNTHVYSWPKNKKNILLRLLREEEYVAPPRGPLPTLQVVPL</sequence>
<proteinExistence type="evidence at protein level"/>
<gene>
    <name evidence="20" type="primary">TRAF3IP2</name>
    <name type="synonym">C6orf2</name>
    <name type="synonym">C6orf4</name>
    <name type="synonym">C6orf5</name>
    <name type="synonym">C6orf6</name>
</gene>
<protein>
    <recommendedName>
        <fullName evidence="18">E3 ubiquitin ligase TRAF3IP2</fullName>
        <ecNumber evidence="8">2.3.2.27</ecNumber>
    </recommendedName>
    <alternativeName>
        <fullName>Adapter protein CIKS</fullName>
    </alternativeName>
    <alternativeName>
        <fullName>Connection to IKK and SAPK/JNK</fullName>
    </alternativeName>
    <alternativeName>
        <fullName>E3 ubiquitin-protein ligase CIKS</fullName>
    </alternativeName>
    <alternativeName>
        <fullName>Nuclear factor NF-kappa-B activator 1</fullName>
        <shortName>ACT1</shortName>
    </alternativeName>
    <alternativeName>
        <fullName>TRAF3-interacting protein 2</fullName>
    </alternativeName>
</protein>
<dbReference type="EC" id="2.3.2.27" evidence="8"/>
<dbReference type="EMBL" id="AF136405">
    <property type="protein sequence ID" value="AAF67445.1"/>
    <property type="molecule type" value="mRNA"/>
</dbReference>
<dbReference type="EMBL" id="AF136406">
    <property type="protein sequence ID" value="AAF67446.1"/>
    <property type="molecule type" value="mRNA"/>
</dbReference>
<dbReference type="EMBL" id="AF136407">
    <property type="protein sequence ID" value="AAF67447.1"/>
    <property type="molecule type" value="mRNA"/>
</dbReference>
<dbReference type="EMBL" id="AF274303">
    <property type="protein sequence ID" value="AAG15367.1"/>
    <property type="molecule type" value="mRNA"/>
</dbReference>
<dbReference type="EMBL" id="AF272151">
    <property type="protein sequence ID" value="AAG15407.1"/>
    <property type="molecule type" value="mRNA"/>
</dbReference>
<dbReference type="EMBL" id="AK025351">
    <property type="protein sequence ID" value="BAB15117.1"/>
    <property type="molecule type" value="mRNA"/>
</dbReference>
<dbReference type="EMBL" id="AK026602">
    <property type="protein sequence ID" value="BAB15507.1"/>
    <property type="status" value="ALT_INIT"/>
    <property type="molecule type" value="mRNA"/>
</dbReference>
<dbReference type="EMBL" id="AK314415">
    <property type="protein sequence ID" value="BAG37036.1"/>
    <property type="molecule type" value="mRNA"/>
</dbReference>
<dbReference type="EMBL" id="AL050289">
    <property type="protein sequence ID" value="CAB43390.1"/>
    <property type="molecule type" value="mRNA"/>
</dbReference>
<dbReference type="EMBL" id="AL008730">
    <property type="status" value="NOT_ANNOTATED_CDS"/>
    <property type="molecule type" value="Genomic_DNA"/>
</dbReference>
<dbReference type="EMBL" id="Z97989">
    <property type="status" value="NOT_ANNOTATED_CDS"/>
    <property type="molecule type" value="Genomic_DNA"/>
</dbReference>
<dbReference type="EMBL" id="CH471051">
    <property type="protein sequence ID" value="EAW48285.1"/>
    <property type="molecule type" value="Genomic_DNA"/>
</dbReference>
<dbReference type="EMBL" id="CH471051">
    <property type="protein sequence ID" value="EAW48287.1"/>
    <property type="molecule type" value="Genomic_DNA"/>
</dbReference>
<dbReference type="EMBL" id="BC002823">
    <property type="protein sequence ID" value="AAH02823.1"/>
    <property type="molecule type" value="mRNA"/>
</dbReference>
<dbReference type="EMBL" id="BI856094">
    <property type="status" value="NOT_ANNOTATED_CDS"/>
    <property type="molecule type" value="mRNA"/>
</dbReference>
<dbReference type="CCDS" id="CCDS5092.1">
    <molecule id="O43734-1"/>
</dbReference>
<dbReference type="CCDS" id="CCDS5093.1">
    <molecule id="O43734-2"/>
</dbReference>
<dbReference type="CCDS" id="CCDS55049.1">
    <molecule id="O43734-4"/>
</dbReference>
<dbReference type="CCDS" id="CCDS55050.1">
    <molecule id="O43734-5"/>
</dbReference>
<dbReference type="PIR" id="T08794">
    <property type="entry name" value="T08794"/>
</dbReference>
<dbReference type="RefSeq" id="NP_001157753.1">
    <molecule id="O43734-5"/>
    <property type="nucleotide sequence ID" value="NM_001164281.3"/>
</dbReference>
<dbReference type="RefSeq" id="NP_001157755.1">
    <molecule id="O43734-4"/>
    <property type="nucleotide sequence ID" value="NM_001164283.3"/>
</dbReference>
<dbReference type="RefSeq" id="NP_671733.2">
    <molecule id="O43734-1"/>
    <property type="nucleotide sequence ID" value="NM_147200.3"/>
</dbReference>
<dbReference type="RefSeq" id="NP_679211.2">
    <molecule id="O43734-2"/>
    <property type="nucleotide sequence ID" value="NM_147686.4"/>
</dbReference>
<dbReference type="RefSeq" id="XP_006715382.1">
    <property type="nucleotide sequence ID" value="XM_006715319.3"/>
</dbReference>
<dbReference type="RefSeq" id="XP_011533688.1">
    <property type="nucleotide sequence ID" value="XM_011535386.1"/>
</dbReference>
<dbReference type="SMR" id="O43734"/>
<dbReference type="BioGRID" id="115979">
    <property type="interactions" value="54"/>
</dbReference>
<dbReference type="ComplexPortal" id="CPX-8776">
    <property type="entry name" value="Interleukin-17A-F receptor-ligand complex"/>
</dbReference>
<dbReference type="ComplexPortal" id="CPX-9201">
    <property type="entry name" value="Interleukin-17A receptor-ligand complex"/>
</dbReference>
<dbReference type="ComplexPortal" id="CPX-9202">
    <property type="entry name" value="Interleukin-17F receptor-ligand complex"/>
</dbReference>
<dbReference type="ComplexPortal" id="CPX-9204">
    <property type="entry name" value="Interleukin-25 receptor-ligand complex"/>
</dbReference>
<dbReference type="ComplexPortal" id="CPX-9206">
    <property type="entry name" value="Interleukin-17B receptor-ligand complex"/>
</dbReference>
<dbReference type="ComplexPortal" id="CPX-9207">
    <property type="entry name" value="Interleukin-17C receptor-ligand complex"/>
</dbReference>
<dbReference type="FunCoup" id="O43734">
    <property type="interactions" value="227"/>
</dbReference>
<dbReference type="IntAct" id="O43734">
    <property type="interactions" value="21"/>
</dbReference>
<dbReference type="MINT" id="O43734"/>
<dbReference type="STRING" id="9606.ENSP00000345984"/>
<dbReference type="ChEMBL" id="CHEMBL4523586"/>
<dbReference type="GlyConnect" id="2015">
    <property type="glycosylation" value="3 N-Linked glycans (1 site)"/>
</dbReference>
<dbReference type="GlyCosmos" id="O43734">
    <property type="glycosylation" value="1 site, 6 glycans"/>
</dbReference>
<dbReference type="GlyGen" id="O43734">
    <property type="glycosylation" value="1 site, 6 N-linked glycans (1 site)"/>
</dbReference>
<dbReference type="iPTMnet" id="O43734"/>
<dbReference type="PhosphoSitePlus" id="O43734"/>
<dbReference type="BioMuta" id="TRAF3IP2"/>
<dbReference type="jPOST" id="O43734"/>
<dbReference type="MassIVE" id="O43734"/>
<dbReference type="PaxDb" id="9606-ENSP00000357750"/>
<dbReference type="PeptideAtlas" id="O43734"/>
<dbReference type="ProteomicsDB" id="49136">
    <molecule id="O43734-1"/>
</dbReference>
<dbReference type="ProteomicsDB" id="49137">
    <molecule id="O43734-2"/>
</dbReference>
<dbReference type="ProteomicsDB" id="49138">
    <molecule id="O43734-3"/>
</dbReference>
<dbReference type="ProteomicsDB" id="49139">
    <molecule id="O43734-4"/>
</dbReference>
<dbReference type="ProteomicsDB" id="69454"/>
<dbReference type="Antibodypedia" id="19327">
    <property type="antibodies" value="428 antibodies from 38 providers"/>
</dbReference>
<dbReference type="DNASU" id="10758"/>
<dbReference type="Ensembl" id="ENST00000340026.10">
    <molecule id="O43734-1"/>
    <property type="protein sequence ID" value="ENSP00000345984.6"/>
    <property type="gene ID" value="ENSG00000056972.21"/>
</dbReference>
<dbReference type="Ensembl" id="ENST00000359831.8">
    <molecule id="O43734-5"/>
    <property type="protein sequence ID" value="ENSP00000352889.4"/>
    <property type="gene ID" value="ENSG00000056972.21"/>
</dbReference>
<dbReference type="Ensembl" id="ENST00000368730.5">
    <molecule id="O43734-4"/>
    <property type="protein sequence ID" value="ENSP00000498323.1"/>
    <property type="gene ID" value="ENSG00000056972.21"/>
</dbReference>
<dbReference type="Ensembl" id="ENST00000368734.5">
    <molecule id="O43734-4"/>
    <property type="protein sequence ID" value="ENSP00000498345.1"/>
    <property type="gene ID" value="ENSG00000056972.21"/>
</dbReference>
<dbReference type="Ensembl" id="ENST00000368735.1">
    <molecule id="O43734-4"/>
    <property type="protein sequence ID" value="ENSP00000357724.1"/>
    <property type="gene ID" value="ENSG00000056972.21"/>
</dbReference>
<dbReference type="Ensembl" id="ENST00000368761.11">
    <molecule id="O43734-2"/>
    <property type="protein sequence ID" value="ENSP00000357750.5"/>
    <property type="gene ID" value="ENSG00000056972.21"/>
</dbReference>
<dbReference type="Ensembl" id="ENST00000651547.2">
    <molecule id="O43734-2"/>
    <property type="protein sequence ID" value="ENSP00000514681.1"/>
    <property type="gene ID" value="ENSG00000056972.21"/>
</dbReference>
<dbReference type="GeneID" id="10758"/>
<dbReference type="KEGG" id="hsa:10758"/>
<dbReference type="MANE-Select" id="ENST00000368761.11">
    <molecule id="O43734-2"/>
    <property type="protein sequence ID" value="ENSP00000357750.5"/>
    <property type="RefSeq nucleotide sequence ID" value="NM_147686.4"/>
    <property type="RefSeq protein sequence ID" value="NP_679211.2"/>
</dbReference>
<dbReference type="UCSC" id="uc003pvf.5">
    <molecule id="O43734-1"/>
    <property type="organism name" value="human"/>
</dbReference>
<dbReference type="AGR" id="HGNC:1343"/>
<dbReference type="CTD" id="10758"/>
<dbReference type="DisGeNET" id="10758"/>
<dbReference type="GeneCards" id="TRAF3IP2"/>
<dbReference type="HGNC" id="HGNC:1343">
    <property type="gene designation" value="TRAF3IP2"/>
</dbReference>
<dbReference type="HPA" id="ENSG00000056972">
    <property type="expression patterns" value="Low tissue specificity"/>
</dbReference>
<dbReference type="MalaCards" id="TRAF3IP2"/>
<dbReference type="MIM" id="607043">
    <property type="type" value="gene"/>
</dbReference>
<dbReference type="MIM" id="614070">
    <property type="type" value="phenotype"/>
</dbReference>
<dbReference type="MIM" id="615527">
    <property type="type" value="phenotype"/>
</dbReference>
<dbReference type="neXtProt" id="NX_O43734"/>
<dbReference type="OpenTargets" id="ENSG00000056972"/>
<dbReference type="Orphanet" id="1334">
    <property type="disease" value="Chronic mucocutaneous candidiasis"/>
</dbReference>
<dbReference type="PharmGKB" id="PA25938"/>
<dbReference type="VEuPathDB" id="HostDB:ENSG00000056972"/>
<dbReference type="eggNOG" id="ENOG502QTXH">
    <property type="taxonomic scope" value="Eukaryota"/>
</dbReference>
<dbReference type="GeneTree" id="ENSGT00940000161944"/>
<dbReference type="HOGENOM" id="CLU_036721_1_0_1"/>
<dbReference type="InParanoid" id="O43734"/>
<dbReference type="OMA" id="QRYPVCA"/>
<dbReference type="OrthoDB" id="6021171at2759"/>
<dbReference type="PAN-GO" id="O43734">
    <property type="GO annotations" value="2 GO annotations based on evolutionary models"/>
</dbReference>
<dbReference type="PhylomeDB" id="O43734"/>
<dbReference type="TreeFam" id="TF329063"/>
<dbReference type="PathwayCommons" id="O43734"/>
<dbReference type="SignaLink" id="O43734"/>
<dbReference type="SIGNOR" id="O43734"/>
<dbReference type="BioGRID-ORCS" id="10758">
    <property type="hits" value="17 hits in 1157 CRISPR screens"/>
</dbReference>
<dbReference type="ChiTaRS" id="TRAF3IP2">
    <property type="organism name" value="human"/>
</dbReference>
<dbReference type="GeneWiki" id="TRAF3IP2"/>
<dbReference type="GenomeRNAi" id="10758"/>
<dbReference type="Pharos" id="O43734">
    <property type="development level" value="Tbio"/>
</dbReference>
<dbReference type="PRO" id="PR:O43734"/>
<dbReference type="Proteomes" id="UP000005640">
    <property type="component" value="Chromosome 6"/>
</dbReference>
<dbReference type="RNAct" id="O43734">
    <property type="molecule type" value="protein"/>
</dbReference>
<dbReference type="Bgee" id="ENSG00000056972">
    <property type="expression patterns" value="Expressed in cartilage tissue and 178 other cell types or tissues"/>
</dbReference>
<dbReference type="ExpressionAtlas" id="O43734">
    <property type="expression patterns" value="baseline and differential"/>
</dbReference>
<dbReference type="GO" id="GO:0005737">
    <property type="term" value="C:cytoplasm"/>
    <property type="evidence" value="ECO:0000305"/>
    <property type="project" value="UniProt"/>
</dbReference>
<dbReference type="GO" id="GO:0031410">
    <property type="term" value="C:cytoplasmic vesicle"/>
    <property type="evidence" value="ECO:0007669"/>
    <property type="project" value="Ensembl"/>
</dbReference>
<dbReference type="GO" id="GO:0031234">
    <property type="term" value="C:extrinsic component of cytoplasmic side of plasma membrane"/>
    <property type="evidence" value="ECO:0000305"/>
    <property type="project" value="UniProt"/>
</dbReference>
<dbReference type="GO" id="GO:0005634">
    <property type="term" value="C:nucleus"/>
    <property type="evidence" value="ECO:0007669"/>
    <property type="project" value="Ensembl"/>
</dbReference>
<dbReference type="GO" id="GO:0005102">
    <property type="term" value="F:signaling receptor binding"/>
    <property type="evidence" value="ECO:0007669"/>
    <property type="project" value="Ensembl"/>
</dbReference>
<dbReference type="GO" id="GO:0061630">
    <property type="term" value="F:ubiquitin protein ligase activity"/>
    <property type="evidence" value="ECO:0000314"/>
    <property type="project" value="UniProtKB"/>
</dbReference>
<dbReference type="GO" id="GO:0002344">
    <property type="term" value="P:B cell affinity maturation"/>
    <property type="evidence" value="ECO:0007669"/>
    <property type="project" value="Ensembl"/>
</dbReference>
<dbReference type="GO" id="GO:0001783">
    <property type="term" value="P:B cell apoptotic process"/>
    <property type="evidence" value="ECO:0007669"/>
    <property type="project" value="Ensembl"/>
</dbReference>
<dbReference type="GO" id="GO:0001782">
    <property type="term" value="P:B cell homeostasis"/>
    <property type="evidence" value="ECO:0007669"/>
    <property type="project" value="Ensembl"/>
</dbReference>
<dbReference type="GO" id="GO:0023035">
    <property type="term" value="P:CD40 signaling pathway"/>
    <property type="evidence" value="ECO:0007669"/>
    <property type="project" value="Ensembl"/>
</dbReference>
<dbReference type="GO" id="GO:1990959">
    <property type="term" value="P:eosinophil homeostasis"/>
    <property type="evidence" value="ECO:0007669"/>
    <property type="project" value="Ensembl"/>
</dbReference>
<dbReference type="GO" id="GO:0002447">
    <property type="term" value="P:eosinophil mediated immunity"/>
    <property type="evidence" value="ECO:0007669"/>
    <property type="project" value="Ensembl"/>
</dbReference>
<dbReference type="GO" id="GO:0001768">
    <property type="term" value="P:establishment of T cell polarity"/>
    <property type="evidence" value="ECO:0007669"/>
    <property type="project" value="Ensembl"/>
</dbReference>
<dbReference type="GO" id="GO:0007507">
    <property type="term" value="P:heart development"/>
    <property type="evidence" value="ECO:0007669"/>
    <property type="project" value="Ensembl"/>
</dbReference>
<dbReference type="GO" id="GO:0006959">
    <property type="term" value="P:humoral immune response"/>
    <property type="evidence" value="ECO:0000318"/>
    <property type="project" value="GO_Central"/>
</dbReference>
<dbReference type="GO" id="GO:0006954">
    <property type="term" value="P:inflammatory response"/>
    <property type="evidence" value="ECO:0000314"/>
    <property type="project" value="MGI"/>
</dbReference>
<dbReference type="GO" id="GO:0097400">
    <property type="term" value="P:interleukin-17-mediated signaling pathway"/>
    <property type="evidence" value="ECO:0000315"/>
    <property type="project" value="UniProtKB"/>
</dbReference>
<dbReference type="GO" id="GO:0038173">
    <property type="term" value="P:interleukin-17A-mediated signaling pathway"/>
    <property type="evidence" value="ECO:0000314"/>
    <property type="project" value="MGI"/>
</dbReference>
<dbReference type="GO" id="GO:0035556">
    <property type="term" value="P:intracellular signal transduction"/>
    <property type="evidence" value="ECO:0000303"/>
    <property type="project" value="UniProtKB"/>
</dbReference>
<dbReference type="GO" id="GO:0001822">
    <property type="term" value="P:kidney development"/>
    <property type="evidence" value="ECO:0007669"/>
    <property type="project" value="Ensembl"/>
</dbReference>
<dbReference type="GO" id="GO:0002269">
    <property type="term" value="P:leukocyte activation involved in inflammatory response"/>
    <property type="evidence" value="ECO:0007669"/>
    <property type="project" value="Ensembl"/>
</dbReference>
<dbReference type="GO" id="GO:0048535">
    <property type="term" value="P:lymph node development"/>
    <property type="evidence" value="ECO:0007669"/>
    <property type="project" value="Ensembl"/>
</dbReference>
<dbReference type="GO" id="GO:0048255">
    <property type="term" value="P:mRNA stabilization"/>
    <property type="evidence" value="ECO:0007669"/>
    <property type="project" value="Ensembl"/>
</dbReference>
<dbReference type="GO" id="GO:0070254">
    <property type="term" value="P:mucus secretion"/>
    <property type="evidence" value="ECO:0007669"/>
    <property type="project" value="Ensembl"/>
</dbReference>
<dbReference type="GO" id="GO:0042119">
    <property type="term" value="P:neutrophil activation"/>
    <property type="evidence" value="ECO:0007669"/>
    <property type="project" value="Ensembl"/>
</dbReference>
<dbReference type="GO" id="GO:0043123">
    <property type="term" value="P:positive regulation of canonical NF-kappaB signal transduction"/>
    <property type="evidence" value="ECO:0000270"/>
    <property type="project" value="UniProtKB"/>
</dbReference>
<dbReference type="GO" id="GO:0002230">
    <property type="term" value="P:positive regulation of defense response to virus by host"/>
    <property type="evidence" value="ECO:0000314"/>
    <property type="project" value="CACAO"/>
</dbReference>
<dbReference type="GO" id="GO:0006606">
    <property type="term" value="P:protein import into nucleus"/>
    <property type="evidence" value="ECO:0007669"/>
    <property type="project" value="Ensembl"/>
</dbReference>
<dbReference type="GO" id="GO:0070534">
    <property type="term" value="P:protein K63-linked ubiquitination"/>
    <property type="evidence" value="ECO:0000314"/>
    <property type="project" value="UniProtKB"/>
</dbReference>
<dbReference type="GO" id="GO:0110012">
    <property type="term" value="P:protein localization to P-body"/>
    <property type="evidence" value="ECO:0007669"/>
    <property type="project" value="Ensembl"/>
</dbReference>
<dbReference type="GO" id="GO:0009410">
    <property type="term" value="P:response to xenobiotic stimulus"/>
    <property type="evidence" value="ECO:0007669"/>
    <property type="project" value="Ensembl"/>
</dbReference>
<dbReference type="GO" id="GO:0023019">
    <property type="term" value="P:signal transduction involved in regulation of gene expression"/>
    <property type="evidence" value="ECO:0007669"/>
    <property type="project" value="Ensembl"/>
</dbReference>
<dbReference type="GO" id="GO:0043588">
    <property type="term" value="P:skin development"/>
    <property type="evidence" value="ECO:0007669"/>
    <property type="project" value="Ensembl"/>
</dbReference>
<dbReference type="GO" id="GO:0048536">
    <property type="term" value="P:spleen development"/>
    <property type="evidence" value="ECO:0007669"/>
    <property type="project" value="Ensembl"/>
</dbReference>
<dbReference type="GO" id="GO:0030217">
    <property type="term" value="P:T cell differentiation"/>
    <property type="evidence" value="ECO:0007669"/>
    <property type="project" value="Ensembl"/>
</dbReference>
<dbReference type="GO" id="GO:0072538">
    <property type="term" value="P:T-helper 17 type immune response"/>
    <property type="evidence" value="ECO:0007669"/>
    <property type="project" value="Ensembl"/>
</dbReference>
<dbReference type="GO" id="GO:0002334">
    <property type="term" value="P:transitional two stage B cell differentiation"/>
    <property type="evidence" value="ECO:0007669"/>
    <property type="project" value="Ensembl"/>
</dbReference>
<dbReference type="GO" id="GO:0033209">
    <property type="term" value="P:tumor necrosis factor-mediated signaling pathway"/>
    <property type="evidence" value="ECO:0007669"/>
    <property type="project" value="Ensembl"/>
</dbReference>
<dbReference type="GO" id="GO:0042092">
    <property type="term" value="P:type 2 immune response"/>
    <property type="evidence" value="ECO:0007669"/>
    <property type="project" value="Ensembl"/>
</dbReference>
<dbReference type="FunFam" id="3.40.50.11530:FF:000007">
    <property type="entry name" value="adapter protein CIKS isoform X3"/>
    <property type="match status" value="1"/>
</dbReference>
<dbReference type="Gene3D" id="3.40.50.11530">
    <property type="match status" value="1"/>
</dbReference>
<dbReference type="InterPro" id="IPR053047">
    <property type="entry name" value="E3_ubiq_ligase_TRAF3IP2"/>
</dbReference>
<dbReference type="InterPro" id="IPR013568">
    <property type="entry name" value="SEFIR_dom"/>
</dbReference>
<dbReference type="PANTHER" id="PTHR34257">
    <property type="entry name" value="ADAPTER PROTEIN CIKS"/>
    <property type="match status" value="1"/>
</dbReference>
<dbReference type="PANTHER" id="PTHR34257:SF2">
    <property type="entry name" value="E3 UBIQUITIN LIGASE TRAF3IP2"/>
    <property type="match status" value="1"/>
</dbReference>
<dbReference type="Pfam" id="PF08357">
    <property type="entry name" value="SEFIR"/>
    <property type="match status" value="1"/>
</dbReference>
<dbReference type="PROSITE" id="PS51534">
    <property type="entry name" value="SEFIR"/>
    <property type="match status" value="1"/>
</dbReference>
<feature type="chain" id="PRO_0000089751" description="E3 ubiquitin ligase TRAF3IP2">
    <location>
        <begin position="1"/>
        <end position="574"/>
    </location>
</feature>
<feature type="domain" description="SEFIR" evidence="1">
    <location>
        <begin position="409"/>
        <end position="550"/>
    </location>
</feature>
<feature type="region of interest" description="Mediates interaction with TRAF6" evidence="4">
    <location>
        <begin position="1"/>
        <end position="256"/>
    </location>
</feature>
<feature type="region of interest" description="Disordered" evidence="2">
    <location>
        <begin position="1"/>
        <end position="67"/>
    </location>
</feature>
<feature type="region of interest" description="Disordered" evidence="2">
    <location>
        <begin position="155"/>
        <end position="211"/>
    </location>
</feature>
<feature type="region of interest" description="Disordered" evidence="2">
    <location>
        <begin position="327"/>
        <end position="403"/>
    </location>
</feature>
<feature type="compositionally biased region" description="Polar residues" evidence="2">
    <location>
        <begin position="52"/>
        <end position="67"/>
    </location>
</feature>
<feature type="compositionally biased region" description="Polar residues" evidence="2">
    <location>
        <begin position="170"/>
        <end position="186"/>
    </location>
</feature>
<feature type="compositionally biased region" description="Pro residues" evidence="2">
    <location>
        <begin position="378"/>
        <end position="394"/>
    </location>
</feature>
<feature type="splice variant" id="VSP_040374" description="In isoform 4." evidence="16">
    <location>
        <begin position="1"/>
        <end position="465"/>
    </location>
</feature>
<feature type="splice variant" id="VSP_035733" description="In isoform 3." evidence="19">
    <location>
        <begin position="1"/>
        <end position="421"/>
    </location>
</feature>
<feature type="splice variant" id="VSP_004163" description="In isoform 2 and isoform 5." evidence="14 15 16 17">
    <location>
        <begin position="1"/>
        <end position="9"/>
    </location>
</feature>
<feature type="splice variant" id="VSP_047098" description="In isoform 5." evidence="15">
    <location>
        <position position="463"/>
    </location>
</feature>
<feature type="sequence variant" id="VAR_047349" description="Likely risk factor for PSORS13; there is a reducing binding of this variant to TRAF6; dbSNP:rs33980500." evidence="9 10">
    <original>D</original>
    <variation>N</variation>
    <location>
        <position position="19"/>
    </location>
</feature>
<feature type="sequence variant" id="VAR_031227" description="In dbSNP:rs13190932.">
    <original>R</original>
    <variation>W</variation>
    <location>
        <position position="83"/>
    </location>
</feature>
<feature type="sequence variant" id="VAR_024307" description="In dbSNP:rs1043730." evidence="3 5 6 7 13">
    <original>H</original>
    <variation>Q</variation>
    <location>
        <position position="332"/>
    </location>
</feature>
<feature type="sequence variant" id="VAR_070904" description="In CANDF8; abolishes homotypic interactions with the SEFIR domain of IL17RA, IL17RB and IL17RC; does not affect homodimerization; does not affect SEFIR-independent interactions with other proteins; dbSNP:rs397518485." evidence="11">
    <original>T</original>
    <variation>I</variation>
    <location>
        <position position="536"/>
    </location>
</feature>
<feature type="mutagenesis site" description="Loss of E3 ubiquitin ligase activity." evidence="8">
    <original>L</original>
    <variation>G</variation>
    <location>
        <position position="303"/>
    </location>
</feature>
<feature type="mutagenesis site" description="Decreases E3 ubiquitin ligase activity." evidence="8">
    <original>P</original>
    <variation>G</variation>
    <location>
        <position position="318"/>
    </location>
</feature>
<feature type="mutagenesis site" description="Loss of E3 ubiquitin ligase activity." evidence="8">
    <original>V</original>
    <variation>R</variation>
    <location>
        <position position="319"/>
    </location>
</feature>
<feature type="mutagenesis site" description="Decreases E3 ubiquitin ligase activity." evidence="8">
    <original>L</original>
    <variation>R</variation>
    <location>
        <position position="324"/>
    </location>
</feature>
<feature type="sequence conflict" description="In Ref. 3; AAG15407." evidence="19" ref="3">
    <original>E</original>
    <variation>D</variation>
    <location>
        <position position="334"/>
    </location>
</feature>
<feature type="sequence conflict" description="In Ref. 1; AAF67447." evidence="19" ref="1">
    <original>P</original>
    <variation>S</variation>
    <location>
        <position position="347"/>
    </location>
</feature>
<evidence type="ECO:0000255" key="1">
    <source>
        <dbReference type="PROSITE-ProRule" id="PRU00867"/>
    </source>
</evidence>
<evidence type="ECO:0000256" key="2">
    <source>
        <dbReference type="SAM" id="MobiDB-lite"/>
    </source>
</evidence>
<evidence type="ECO:0000269" key="3">
    <source>
    </source>
</evidence>
<evidence type="ECO:0000269" key="4">
    <source>
    </source>
</evidence>
<evidence type="ECO:0000269" key="5">
    <source>
    </source>
</evidence>
<evidence type="ECO:0000269" key="6">
    <source>
    </source>
</evidence>
<evidence type="ECO:0000269" key="7">
    <source>
    </source>
</evidence>
<evidence type="ECO:0000269" key="8">
    <source>
    </source>
</evidence>
<evidence type="ECO:0000269" key="9">
    <source>
    </source>
</evidence>
<evidence type="ECO:0000269" key="10">
    <source>
    </source>
</evidence>
<evidence type="ECO:0000269" key="11">
    <source>
    </source>
</evidence>
<evidence type="ECO:0000269" key="12">
    <source>
    </source>
</evidence>
<evidence type="ECO:0000269" key="13">
    <source ref="7"/>
</evidence>
<evidence type="ECO:0000303" key="14">
    <source>
    </source>
</evidence>
<evidence type="ECO:0000303" key="15">
    <source>
    </source>
</evidence>
<evidence type="ECO:0000303" key="16">
    <source>
    </source>
</evidence>
<evidence type="ECO:0000303" key="17">
    <source>
    </source>
</evidence>
<evidence type="ECO:0000303" key="18">
    <source>
    </source>
</evidence>
<evidence type="ECO:0000305" key="19"/>
<evidence type="ECO:0000312" key="20">
    <source>
        <dbReference type="HGNC" id="HGNC:1343"/>
    </source>
</evidence>
<comment type="function">
    <text evidence="8 11 12">E3 ubiquitin ligase that catalyzes 'Lys-63'-linked polyubiquitination of target protein, enhancing protein-protein interaction and cell signaling (PubMed:19825828). Transfers ubiquitin from E2 ubiquitin-conjugating enzyme UBE2V1-UBE2N to substrate protein (PubMed:19825828). Essential adapter molecule in IL17A-mediated signaling (PubMed:19825828, PubMed:24120361). Upon IL17A stimulation, interacts with IL17RA and IL17RC receptor chains through SEFIR domains and catalyzes 'Lys-63'-linked polyubiquitination of TRAF6, leading to TRAF6-mediated activation of NF-kappa-B and MAPkinase pathways (PubMed:19825828).</text>
</comment>
<comment type="catalytic activity">
    <reaction evidence="8">
        <text>S-ubiquitinyl-[E2 ubiquitin-conjugating enzyme]-L-cysteine + [acceptor protein]-L-lysine = [E2 ubiquitin-conjugating enzyme]-L-cysteine + N(6)-ubiquitinyl-[acceptor protein]-L-lysine.</text>
        <dbReference type="EC" id="2.3.2.27"/>
    </reaction>
</comment>
<comment type="subunit">
    <text evidence="4 8 11 12">Interacts with IKBKG/NF-kappa B essential modulator, with CHUK/IKK-alpha and with IKBKB/IKK-beta (PubMed:12459498). Interacts with TRAF6; this interaction is direct (PubMed:12459498, PubMed:19825828). Interacts with IL17RA and IL17RC (PubMed:19825828, PubMed:24120361, PubMed:33723527). Interacts with IL17RB (PubMed:24120361).</text>
</comment>
<comment type="interaction">
    <interactant intactId="EBI-744798">
        <id>O43734</id>
    </interactant>
    <interactant intactId="EBI-10229248">
        <id>Q96C98</id>
        <label>FHL3</label>
    </interactant>
    <organismsDiffer>false</organismsDiffer>
    <experiments>3</experiments>
</comment>
<comment type="interaction">
    <interactant intactId="EBI-744798">
        <id>O43734</id>
    </interactant>
    <interactant intactId="EBI-723426">
        <id>Q13084</id>
        <label>MRPL28</label>
    </interactant>
    <organismsDiffer>false</organismsDiffer>
    <experiments>3</experiments>
</comment>
<comment type="interaction">
    <interactant intactId="EBI-744798">
        <id>O43734</id>
    </interactant>
    <interactant intactId="EBI-10182375">
        <id>Q9UFD9</id>
        <label>RIMBP3</label>
    </interactant>
    <organismsDiffer>false</organismsDiffer>
    <experiments>3</experiments>
</comment>
<comment type="interaction">
    <interactant intactId="EBI-744798">
        <id>O43734</id>
    </interactant>
    <interactant intactId="EBI-749295">
        <id>O75716</id>
        <label>STK16</label>
    </interactant>
    <organismsDiffer>false</organismsDiffer>
    <experiments>3</experiments>
</comment>
<comment type="interaction">
    <interactant intactId="EBI-744798">
        <id>O43734</id>
    </interactant>
    <interactant intactId="EBI-359276">
        <id>Q9Y4K3</id>
        <label>TRAF6</label>
    </interactant>
    <organismsDiffer>false</organismsDiffer>
    <experiments>4</experiments>
</comment>
<comment type="interaction">
    <interactant intactId="EBI-744798">
        <id>O43734</id>
    </interactant>
    <interactant intactId="EBI-742327">
        <id>Q15654</id>
        <label>TRIP6</label>
    </interactant>
    <organismsDiffer>false</organismsDiffer>
    <experiments>3</experiments>
</comment>
<comment type="alternative products">
    <event type="alternative splicing"/>
    <isoform>
        <id>O43734-1</id>
        <name>1</name>
        <name>C6ORF4</name>
        <sequence type="displayed"/>
    </isoform>
    <isoform>
        <id>O43734-2</id>
        <name>2</name>
        <name>C6ORF5</name>
        <name>C6ORF6</name>
        <sequence type="described" ref="VSP_004163"/>
    </isoform>
    <isoform>
        <id>O43734-3</id>
        <name>3</name>
        <sequence type="described" ref="VSP_035733"/>
    </isoform>
    <isoform>
        <id>O43734-4</id>
        <name>4</name>
        <sequence type="described" ref="VSP_040374"/>
    </isoform>
    <isoform>
        <id>O43734-5</id>
        <name>5</name>
        <sequence type="described" ref="VSP_004163 VSP_047098"/>
    </isoform>
</comment>
<comment type="tissue specificity">
    <text>Widely expressed.</text>
</comment>
<comment type="disease" evidence="9 10">
    <disease id="DI-03151">
        <name>Psoriasis 13</name>
        <acronym>PSORS13</acronym>
        <description>A common, chronic inflammatory disease of the skin with multifactorial etiology. It is characterized by red, scaly plaques usually found on the scalp, elbows and knees. These lesions are caused by abnormal keratinocyte proliferation and infiltration of inflammatory cells into the dermis and epidermis.</description>
        <dbReference type="MIM" id="614070"/>
    </disease>
    <text>Disease susceptibility is associated with variants affecting the gene represented in this entry.</text>
</comment>
<comment type="disease" evidence="11">
    <disease id="DI-03950">
        <name>Candidiasis, familial, 8</name>
        <acronym>CANDF8</acronym>
        <description>A primary immunodeficiency disorder with altered immune responses and impaired clearance of fungal infections, selective against Candida. It is characterized by persistent and/or recurrent infections of the skin, nails and mucous membranes caused by organisms of the genus Candida, mainly Candida albicans.</description>
        <dbReference type="MIM" id="615527"/>
    </disease>
    <text>The disease is caused by variants affecting the gene represented in this entry.</text>
</comment>
<comment type="caution">
    <text evidence="19">The presence of U-box domain is not predicted by SMART and SWISS-MODEL tools.</text>
</comment>
<comment type="sequence caution" evidence="19">
    <conflict type="erroneous initiation">
        <sequence resource="EMBL-CDS" id="BAB15507"/>
    </conflict>
    <text>Truncated N-terminus.</text>
</comment>
<accession>O43734</accession>
<accession>B2RAY9</accession>
<accession>E1P555</accession>
<accession>Q5R3A3</accession>
<accession>Q7Z6Q1</accession>
<accession>Q7Z6Q2</accession>
<accession>Q7Z6Q3</accession>
<accession>Q9H5W2</accession>
<accession>Q9H6Y3</accession>
<accession>Q9NS14</accession>
<accession>Q9UG72</accession>
<keyword id="KW-0025">Alternative splicing</keyword>
<keyword id="KW-0225">Disease variant</keyword>
<keyword id="KW-0395">Inflammatory response</keyword>
<keyword id="KW-1267">Proteomics identification</keyword>
<keyword id="KW-1185">Reference proteome</keyword>
<keyword id="KW-0808">Transferase</keyword>
<keyword id="KW-0833">Ubl conjugation pathway</keyword>
<reference key="1">
    <citation type="journal article" date="2000" name="Gene">
        <title>Cloning and characterization of two overlapping genes in a subregion at 6q21 involved in replicative senescence and schizophrenia.</title>
        <authorList>
            <person name="Morelli C."/>
            <person name="Magnanini C."/>
            <person name="Mungall A.J."/>
            <person name="Negrini M."/>
            <person name="Barbanti-Brodano G."/>
        </authorList>
    </citation>
    <scope>NUCLEOTIDE SEQUENCE [MRNA] (ISOFORMS 1 AND 2)</scope>
</reference>
<reference key="2">
    <citation type="journal article" date="2000" name="Proc. Natl. Acad. Sci. U.S.A.">
        <title>Act1, an NF-kappa B-activating protein.</title>
        <authorList>
            <person name="Li X."/>
            <person name="Commane M."/>
            <person name="Nie H."/>
            <person name="Hua X."/>
            <person name="Chatterjee-Kishore M."/>
            <person name="Wald D."/>
            <person name="Haag M."/>
            <person name="Stark G.R."/>
        </authorList>
    </citation>
    <scope>NUCLEOTIDE SEQUENCE [MRNA] (ISOFORM 1)</scope>
    <scope>VARIANT GLN-332</scope>
    <source>
        <tissue>Embryonic kidney</tissue>
    </source>
</reference>
<reference key="3">
    <citation type="journal article" date="2000" name="Proc. Natl. Acad. Sci. U.S.A.">
        <title>CIKS, a connection to Ikappa B kinase and stress-activated protein kinase.</title>
        <authorList>
            <person name="Leonardi A."/>
            <person name="Chariot A."/>
            <person name="Claudio E."/>
            <person name="Cunningham K."/>
            <person name="Siebenlist U."/>
        </authorList>
    </citation>
    <scope>NUCLEOTIDE SEQUENCE [MRNA] (ISOFORM 1)</scope>
    <source>
        <tissue>Liver</tissue>
    </source>
</reference>
<reference key="4">
    <citation type="journal article" date="2004" name="Nat. Genet.">
        <title>Complete sequencing and characterization of 21,243 full-length human cDNAs.</title>
        <authorList>
            <person name="Ota T."/>
            <person name="Suzuki Y."/>
            <person name="Nishikawa T."/>
            <person name="Otsuki T."/>
            <person name="Sugiyama T."/>
            <person name="Irie R."/>
            <person name="Wakamatsu A."/>
            <person name="Hayashi K."/>
            <person name="Sato H."/>
            <person name="Nagai K."/>
            <person name="Kimura K."/>
            <person name="Makita H."/>
            <person name="Sekine M."/>
            <person name="Obayashi M."/>
            <person name="Nishi T."/>
            <person name="Shibahara T."/>
            <person name="Tanaka T."/>
            <person name="Ishii S."/>
            <person name="Yamamoto J."/>
            <person name="Saito K."/>
            <person name="Kawai Y."/>
            <person name="Isono Y."/>
            <person name="Nakamura Y."/>
            <person name="Nagahari K."/>
            <person name="Murakami K."/>
            <person name="Yasuda T."/>
            <person name="Iwayanagi T."/>
            <person name="Wagatsuma M."/>
            <person name="Shiratori A."/>
            <person name="Sudo H."/>
            <person name="Hosoiri T."/>
            <person name="Kaku Y."/>
            <person name="Kodaira H."/>
            <person name="Kondo H."/>
            <person name="Sugawara M."/>
            <person name="Takahashi M."/>
            <person name="Kanda K."/>
            <person name="Yokoi T."/>
            <person name="Furuya T."/>
            <person name="Kikkawa E."/>
            <person name="Omura Y."/>
            <person name="Abe K."/>
            <person name="Kamihara K."/>
            <person name="Katsuta N."/>
            <person name="Sato K."/>
            <person name="Tanikawa M."/>
            <person name="Yamazaki M."/>
            <person name="Ninomiya K."/>
            <person name="Ishibashi T."/>
            <person name="Yamashita H."/>
            <person name="Murakawa K."/>
            <person name="Fujimori K."/>
            <person name="Tanai H."/>
            <person name="Kimata M."/>
            <person name="Watanabe M."/>
            <person name="Hiraoka S."/>
            <person name="Chiba Y."/>
            <person name="Ishida S."/>
            <person name="Ono Y."/>
            <person name="Takiguchi S."/>
            <person name="Watanabe S."/>
            <person name="Yosida M."/>
            <person name="Hotuta T."/>
            <person name="Kusano J."/>
            <person name="Kanehori K."/>
            <person name="Takahashi-Fujii A."/>
            <person name="Hara H."/>
            <person name="Tanase T.-O."/>
            <person name="Nomura Y."/>
            <person name="Togiya S."/>
            <person name="Komai F."/>
            <person name="Hara R."/>
            <person name="Takeuchi K."/>
            <person name="Arita M."/>
            <person name="Imose N."/>
            <person name="Musashino K."/>
            <person name="Yuuki H."/>
            <person name="Oshima A."/>
            <person name="Sasaki N."/>
            <person name="Aotsuka S."/>
            <person name="Yoshikawa Y."/>
            <person name="Matsunawa H."/>
            <person name="Ichihara T."/>
            <person name="Shiohata N."/>
            <person name="Sano S."/>
            <person name="Moriya S."/>
            <person name="Momiyama H."/>
            <person name="Satoh N."/>
            <person name="Takami S."/>
            <person name="Terashima Y."/>
            <person name="Suzuki O."/>
            <person name="Nakagawa S."/>
            <person name="Senoh A."/>
            <person name="Mizoguchi H."/>
            <person name="Goto Y."/>
            <person name="Shimizu F."/>
            <person name="Wakebe H."/>
            <person name="Hishigaki H."/>
            <person name="Watanabe T."/>
            <person name="Sugiyama A."/>
            <person name="Takemoto M."/>
            <person name="Kawakami B."/>
            <person name="Yamazaki M."/>
            <person name="Watanabe K."/>
            <person name="Kumagai A."/>
            <person name="Itakura S."/>
            <person name="Fukuzumi Y."/>
            <person name="Fujimori Y."/>
            <person name="Komiyama M."/>
            <person name="Tashiro H."/>
            <person name="Tanigami A."/>
            <person name="Fujiwara T."/>
            <person name="Ono T."/>
            <person name="Yamada K."/>
            <person name="Fujii Y."/>
            <person name="Ozaki K."/>
            <person name="Hirao M."/>
            <person name="Ohmori Y."/>
            <person name="Kawabata A."/>
            <person name="Hikiji T."/>
            <person name="Kobatake N."/>
            <person name="Inagaki H."/>
            <person name="Ikema Y."/>
            <person name="Okamoto S."/>
            <person name="Okitani R."/>
            <person name="Kawakami T."/>
            <person name="Noguchi S."/>
            <person name="Itoh T."/>
            <person name="Shigeta K."/>
            <person name="Senba T."/>
            <person name="Matsumura K."/>
            <person name="Nakajima Y."/>
            <person name="Mizuno T."/>
            <person name="Morinaga M."/>
            <person name="Sasaki M."/>
            <person name="Togashi T."/>
            <person name="Oyama M."/>
            <person name="Hata H."/>
            <person name="Watanabe M."/>
            <person name="Komatsu T."/>
            <person name="Mizushima-Sugano J."/>
            <person name="Satoh T."/>
            <person name="Shirai Y."/>
            <person name="Takahashi Y."/>
            <person name="Nakagawa K."/>
            <person name="Okumura K."/>
            <person name="Nagase T."/>
            <person name="Nomura N."/>
            <person name="Kikuchi H."/>
            <person name="Masuho Y."/>
            <person name="Yamashita R."/>
            <person name="Nakai K."/>
            <person name="Yada T."/>
            <person name="Nakamura Y."/>
            <person name="Ohara O."/>
            <person name="Isogai T."/>
            <person name="Sugano S."/>
        </authorList>
    </citation>
    <scope>NUCLEOTIDE SEQUENCE [LARGE SCALE MRNA] (ISOFORMS 1; 2 AND 5)</scope>
    <scope>VARIANT GLN-332</scope>
    <source>
        <tissue>Colon</tissue>
        <tissue>Kidney</tissue>
    </source>
</reference>
<reference key="5">
    <citation type="journal article" date="2007" name="BMC Genomics">
        <title>The full-ORF clone resource of the German cDNA consortium.</title>
        <authorList>
            <person name="Bechtel S."/>
            <person name="Rosenfelder H."/>
            <person name="Duda A."/>
            <person name="Schmidt C.P."/>
            <person name="Ernst U."/>
            <person name="Wellenreuther R."/>
            <person name="Mehrle A."/>
            <person name="Schuster C."/>
            <person name="Bahr A."/>
            <person name="Bloecker H."/>
            <person name="Heubner D."/>
            <person name="Hoerlein A."/>
            <person name="Michel G."/>
            <person name="Wedler H."/>
            <person name="Koehrer K."/>
            <person name="Ottenwaelder B."/>
            <person name="Poustka A."/>
            <person name="Wiemann S."/>
            <person name="Schupp I."/>
        </authorList>
    </citation>
    <scope>NUCLEOTIDE SEQUENCE [LARGE SCALE MRNA] (ISOFORM 2)</scope>
    <scope>VARIANT GLN-332</scope>
    <source>
        <tissue>Uterus</tissue>
    </source>
</reference>
<reference key="6">
    <citation type="journal article" date="2003" name="Nature">
        <title>The DNA sequence and analysis of human chromosome 6.</title>
        <authorList>
            <person name="Mungall A.J."/>
            <person name="Palmer S.A."/>
            <person name="Sims S.K."/>
            <person name="Edwards C.A."/>
            <person name="Ashurst J.L."/>
            <person name="Wilming L."/>
            <person name="Jones M.C."/>
            <person name="Horton R."/>
            <person name="Hunt S.E."/>
            <person name="Scott C.E."/>
            <person name="Gilbert J.G.R."/>
            <person name="Clamp M.E."/>
            <person name="Bethel G."/>
            <person name="Milne S."/>
            <person name="Ainscough R."/>
            <person name="Almeida J.P."/>
            <person name="Ambrose K.D."/>
            <person name="Andrews T.D."/>
            <person name="Ashwell R.I.S."/>
            <person name="Babbage A.K."/>
            <person name="Bagguley C.L."/>
            <person name="Bailey J."/>
            <person name="Banerjee R."/>
            <person name="Barker D.J."/>
            <person name="Barlow K.F."/>
            <person name="Bates K."/>
            <person name="Beare D.M."/>
            <person name="Beasley H."/>
            <person name="Beasley O."/>
            <person name="Bird C.P."/>
            <person name="Blakey S.E."/>
            <person name="Bray-Allen S."/>
            <person name="Brook J."/>
            <person name="Brown A.J."/>
            <person name="Brown J.Y."/>
            <person name="Burford D.C."/>
            <person name="Burrill W."/>
            <person name="Burton J."/>
            <person name="Carder C."/>
            <person name="Carter N.P."/>
            <person name="Chapman J.C."/>
            <person name="Clark S.Y."/>
            <person name="Clark G."/>
            <person name="Clee C.M."/>
            <person name="Clegg S."/>
            <person name="Cobley V."/>
            <person name="Collier R.E."/>
            <person name="Collins J.E."/>
            <person name="Colman L.K."/>
            <person name="Corby N.R."/>
            <person name="Coville G.J."/>
            <person name="Culley K.M."/>
            <person name="Dhami P."/>
            <person name="Davies J."/>
            <person name="Dunn M."/>
            <person name="Earthrowl M.E."/>
            <person name="Ellington A.E."/>
            <person name="Evans K.A."/>
            <person name="Faulkner L."/>
            <person name="Francis M.D."/>
            <person name="Frankish A."/>
            <person name="Frankland J."/>
            <person name="French L."/>
            <person name="Garner P."/>
            <person name="Garnett J."/>
            <person name="Ghori M.J."/>
            <person name="Gilby L.M."/>
            <person name="Gillson C.J."/>
            <person name="Glithero R.J."/>
            <person name="Grafham D.V."/>
            <person name="Grant M."/>
            <person name="Gribble S."/>
            <person name="Griffiths C."/>
            <person name="Griffiths M.N.D."/>
            <person name="Hall R."/>
            <person name="Halls K.S."/>
            <person name="Hammond S."/>
            <person name="Harley J.L."/>
            <person name="Hart E.A."/>
            <person name="Heath P.D."/>
            <person name="Heathcott R."/>
            <person name="Holmes S.J."/>
            <person name="Howden P.J."/>
            <person name="Howe K.L."/>
            <person name="Howell G.R."/>
            <person name="Huckle E."/>
            <person name="Humphray S.J."/>
            <person name="Humphries M.D."/>
            <person name="Hunt A.R."/>
            <person name="Johnson C.M."/>
            <person name="Joy A.A."/>
            <person name="Kay M."/>
            <person name="Keenan S.J."/>
            <person name="Kimberley A.M."/>
            <person name="King A."/>
            <person name="Laird G.K."/>
            <person name="Langford C."/>
            <person name="Lawlor S."/>
            <person name="Leongamornlert D.A."/>
            <person name="Leversha M."/>
            <person name="Lloyd C.R."/>
            <person name="Lloyd D.M."/>
            <person name="Loveland J.E."/>
            <person name="Lovell J."/>
            <person name="Martin S."/>
            <person name="Mashreghi-Mohammadi M."/>
            <person name="Maslen G.L."/>
            <person name="Matthews L."/>
            <person name="McCann O.T."/>
            <person name="McLaren S.J."/>
            <person name="McLay K."/>
            <person name="McMurray A."/>
            <person name="Moore M.J.F."/>
            <person name="Mullikin J.C."/>
            <person name="Niblett D."/>
            <person name="Nickerson T."/>
            <person name="Novik K.L."/>
            <person name="Oliver K."/>
            <person name="Overton-Larty E.K."/>
            <person name="Parker A."/>
            <person name="Patel R."/>
            <person name="Pearce A.V."/>
            <person name="Peck A.I."/>
            <person name="Phillimore B.J.C.T."/>
            <person name="Phillips S."/>
            <person name="Plumb R.W."/>
            <person name="Porter K.M."/>
            <person name="Ramsey Y."/>
            <person name="Ranby S.A."/>
            <person name="Rice C.M."/>
            <person name="Ross M.T."/>
            <person name="Searle S.M."/>
            <person name="Sehra H.K."/>
            <person name="Sheridan E."/>
            <person name="Skuce C.D."/>
            <person name="Smith S."/>
            <person name="Smith M."/>
            <person name="Spraggon L."/>
            <person name="Squares S.L."/>
            <person name="Steward C.A."/>
            <person name="Sycamore N."/>
            <person name="Tamlyn-Hall G."/>
            <person name="Tester J."/>
            <person name="Theaker A.J."/>
            <person name="Thomas D.W."/>
            <person name="Thorpe A."/>
            <person name="Tracey A."/>
            <person name="Tromans A."/>
            <person name="Tubby B."/>
            <person name="Wall M."/>
            <person name="Wallis J.M."/>
            <person name="West A.P."/>
            <person name="White S.S."/>
            <person name="Whitehead S.L."/>
            <person name="Whittaker H."/>
            <person name="Wild A."/>
            <person name="Willey D.J."/>
            <person name="Wilmer T.E."/>
            <person name="Wood J.M."/>
            <person name="Wray P.W."/>
            <person name="Wyatt J.C."/>
            <person name="Young L."/>
            <person name="Younger R.M."/>
            <person name="Bentley D.R."/>
            <person name="Coulson A."/>
            <person name="Durbin R.M."/>
            <person name="Hubbard T."/>
            <person name="Sulston J.E."/>
            <person name="Dunham I."/>
            <person name="Rogers J."/>
            <person name="Beck S."/>
        </authorList>
    </citation>
    <scope>NUCLEOTIDE SEQUENCE [LARGE SCALE GENOMIC DNA]</scope>
</reference>
<reference key="7">
    <citation type="submission" date="2005-09" db="EMBL/GenBank/DDBJ databases">
        <authorList>
            <person name="Mural R.J."/>
            <person name="Istrail S."/>
            <person name="Sutton G.G."/>
            <person name="Florea L."/>
            <person name="Halpern A.L."/>
            <person name="Mobarry C.M."/>
            <person name="Lippert R."/>
            <person name="Walenz B."/>
            <person name="Shatkay H."/>
            <person name="Dew I."/>
            <person name="Miller J.R."/>
            <person name="Flanigan M.J."/>
            <person name="Edwards N.J."/>
            <person name="Bolanos R."/>
            <person name="Fasulo D."/>
            <person name="Halldorsson B.V."/>
            <person name="Hannenhalli S."/>
            <person name="Turner R."/>
            <person name="Yooseph S."/>
            <person name="Lu F."/>
            <person name="Nusskern D.R."/>
            <person name="Shue B.C."/>
            <person name="Zheng X.H."/>
            <person name="Zhong F."/>
            <person name="Delcher A.L."/>
            <person name="Huson D.H."/>
            <person name="Kravitz S.A."/>
            <person name="Mouchard L."/>
            <person name="Reinert K."/>
            <person name="Remington K.A."/>
            <person name="Clark A.G."/>
            <person name="Waterman M.S."/>
            <person name="Eichler E.E."/>
            <person name="Adams M.D."/>
            <person name="Hunkapiller M.W."/>
            <person name="Myers E.W."/>
            <person name="Venter J.C."/>
        </authorList>
    </citation>
    <scope>NUCLEOTIDE SEQUENCE [LARGE SCALE GENOMIC DNA]</scope>
    <scope>VARIANT GLN-332</scope>
</reference>
<reference key="8">
    <citation type="journal article" date="2004" name="Genome Res.">
        <title>The status, quality, and expansion of the NIH full-length cDNA project: the Mammalian Gene Collection (MGC).</title>
        <authorList>
            <consortium name="The MGC Project Team"/>
        </authorList>
    </citation>
    <scope>NUCLEOTIDE SEQUENCE [LARGE SCALE MRNA] (ISOFORMS 2 AND 4)</scope>
    <scope>VARIANT GLN-332</scope>
    <source>
        <tissue>Lymph</tissue>
    </source>
</reference>
<reference key="9">
    <citation type="journal article" date="2002" name="FEBS Lett.">
        <title>NF-kappaB activator Act1 associates with IL-1/Toll pathway adapter molecule TRAF6.</title>
        <authorList>
            <person name="Kanamori M."/>
            <person name="Kai C."/>
            <person name="Hayashizaki Y."/>
            <person name="Suzuki H."/>
        </authorList>
    </citation>
    <scope>INTERACTION WITH TRAF6</scope>
</reference>
<reference key="10">
    <citation type="journal article" date="2009" name="Sci. Signal.">
        <title>Act1, a U-box E3 ubiquitin ligase for IL-17 signaling.</title>
        <authorList>
            <person name="Liu C."/>
            <person name="Qian W."/>
            <person name="Qian Y."/>
            <person name="Giltiay N.V."/>
            <person name="Lu Y."/>
            <person name="Swaidani S."/>
            <person name="Misra S."/>
            <person name="Deng L."/>
            <person name="Chen Z.J."/>
            <person name="Li X."/>
        </authorList>
    </citation>
    <scope>FUNCTION</scope>
    <scope>MUTAGENESIS OF LEU-303; PRO-318; VAL-319 AND LEU-324</scope>
    <scope>INTERACTION WITH IL17RA AND TRAF6</scope>
    <scope>CATALYTIC ACTIVITY</scope>
</reference>
<reference key="11">
    <citation type="journal article" date="2021" name="IScience">
        <title>Title: ORF8 contributes to cytokine storm during SARS-CoV-2 infection by activating IL-17 pathway.</title>
        <authorList>
            <person name="Lin X."/>
            <person name="Fu B."/>
            <person name="Yin S."/>
            <person name="Li Z."/>
            <person name="Liu H."/>
            <person name="Zhang H."/>
            <person name="Xing N."/>
            <person name="Wang Y."/>
            <person name="Xue W."/>
            <person name="Xiong Y."/>
            <person name="Zhang S."/>
            <person name="Zhao Q."/>
            <person name="Xu S."/>
            <person name="Zhang J."/>
            <person name="Wang P."/>
            <person name="Nian W."/>
            <person name="Wang X."/>
            <person name="Wu H."/>
        </authorList>
    </citation>
    <scope>INTERACTION WITH IL17RA AND TRAF6</scope>
    <scope>FUNCTION</scope>
</reference>
<reference key="12">
    <citation type="journal article" date="2010" name="Nat. Genet.">
        <title>Common variants at TRAF3IP2 are associated with susceptibility to psoriatic arthritis and psoriasis.</title>
        <authorList>
            <person name="Huffmeier U."/>
            <person name="Uebe S."/>
            <person name="Ekici A.B."/>
            <person name="Bowes J."/>
            <person name="Giardina E."/>
            <person name="Korendowych E."/>
            <person name="Juneblad K."/>
            <person name="Apel M."/>
            <person name="McManus R."/>
            <person name="Ho P."/>
            <person name="Bruce I.N."/>
            <person name="Ryan A.W."/>
            <person name="Behrens F."/>
            <person name="Lascorz J."/>
            <person name="Bohm B."/>
            <person name="Traupe H."/>
            <person name="Lohmann J."/>
            <person name="Gieger C."/>
            <person name="Wichmann H.E."/>
            <person name="Herold C."/>
            <person name="Steffens M."/>
            <person name="Klareskog L."/>
            <person name="Wienker T.F."/>
            <person name="Fitzgerald O."/>
            <person name="Alenius G.M."/>
            <person name="McHugh N.J."/>
            <person name="Novelli G."/>
            <person name="Burkhardt H."/>
            <person name="Barton A."/>
            <person name="Reis A."/>
        </authorList>
    </citation>
    <scope>INVOLVEMENT IN SUSCEPTIBILITY TO PSORS13</scope>
    <scope>VARIANT ASN-19</scope>
    <scope>CHARACTERIZATION OF VARIANT ASN-19</scope>
</reference>
<reference key="13">
    <citation type="journal article" date="2010" name="Nat. Genet.">
        <title>Genome-wide association study identifies a psoriasis susceptibility locus at TRAF3IP2.</title>
        <authorList>
            <person name="Ellinghaus E."/>
            <person name="Ellinghaus D."/>
            <person name="Stuart P.E."/>
            <person name="Nair R.P."/>
            <person name="Debrus S."/>
            <person name="Raelson J.V."/>
            <person name="Belouchi M."/>
            <person name="Fournier H."/>
            <person name="Reinhard C."/>
            <person name="Ding J."/>
            <person name="Li Y."/>
            <person name="Tejasvi T."/>
            <person name="Gudjonsson J."/>
            <person name="Stoll S.W."/>
            <person name="Voorhees J.J."/>
            <person name="Lambert S."/>
            <person name="Weidinger S."/>
            <person name="Eberlein B."/>
            <person name="Kunz M."/>
            <person name="Rahman P."/>
            <person name="Gladman D.D."/>
            <person name="Gieger C."/>
            <person name="Wichmann H.E."/>
            <person name="Karlsen T.H."/>
            <person name="Mayr G."/>
            <person name="Albrecht M."/>
            <person name="Kabelitz D."/>
            <person name="Mrowietz U."/>
            <person name="Abecasis G.R."/>
            <person name="Elder J.T."/>
            <person name="Schreiber S."/>
            <person name="Weichenthal M."/>
            <person name="Franke A."/>
        </authorList>
    </citation>
    <scope>INVOLVEMENT IN SUSCEPTIBILITY TO PSORS13</scope>
    <scope>VARIANT ASN-19</scope>
</reference>
<reference key="14">
    <citation type="journal article" date="2013" name="Immunity">
        <title>An ACT1 mutation selectively abolishes interleukin-17 responses in humans with chronic mucocutaneous candidiasis.</title>
        <authorList>
            <person name="Boisson B."/>
            <person name="Wang C."/>
            <person name="Pedergnana V."/>
            <person name="Wu L."/>
            <person name="Cypowyj S."/>
            <person name="Rybojad M."/>
            <person name="Belkadi A."/>
            <person name="Picard C."/>
            <person name="Abel L."/>
            <person name="Fieschi C."/>
            <person name="Puel A."/>
            <person name="Li X."/>
            <person name="Casanova J.L."/>
        </authorList>
    </citation>
    <scope>VARIANT CANDF8 ILE-536</scope>
    <scope>CHARACTERIZATION OF VARIANT CANDF8 ILE-536</scope>
    <scope>FUNCTION</scope>
    <scope>INTERACTION WITH IL17RA; IL17RB AND IL17RC</scope>
</reference>